<sequence length="113" mass="12108">AFKGILSNADIKAAEAACFKEGSFDEDGFYAKVGLDAFSADELKKLFKIADEDKEGFIEEDELKLFLIAFAADLRALTDAETKAFLKAGDSDGDGKIGVDEFGALVDKWGAKG</sequence>
<protein>
    <recommendedName>
        <fullName>Parvalbumin beta</fullName>
    </recommendedName>
    <alternativeName>
        <fullName evidence="5">Allergen Gad c I</fullName>
    </alternativeName>
    <alternativeName>
        <fullName>Allergen M</fullName>
    </alternativeName>
    <allergenName evidence="6">Gad c 1.0101</allergenName>
</protein>
<keyword id="KW-0007">Acetylation</keyword>
<keyword id="KW-0020">Allergen</keyword>
<keyword id="KW-0106">Calcium</keyword>
<keyword id="KW-0903">Direct protein sequencing</keyword>
<keyword id="KW-0325">Glycoprotein</keyword>
<keyword id="KW-0479">Metal-binding</keyword>
<keyword id="KW-0514">Muscle protein</keyword>
<keyword id="KW-0677">Repeat</keyword>
<name>PRVB_GADMC</name>
<evidence type="ECO:0000250" key="1">
    <source>
        <dbReference type="UniProtKB" id="P02621"/>
    </source>
</evidence>
<evidence type="ECO:0000255" key="2">
    <source>
        <dbReference type="PROSITE-ProRule" id="PRU00448"/>
    </source>
</evidence>
<evidence type="ECO:0000269" key="3">
    <source>
    </source>
</evidence>
<evidence type="ECO:0000269" key="4">
    <source>
    </source>
</evidence>
<evidence type="ECO:0000303" key="5">
    <source>
    </source>
</evidence>
<evidence type="ECO:0000305" key="6"/>
<comment type="function">
    <text>In muscle, parvalbumin is thought to be involved in relaxation after contraction. It binds two calcium ions.</text>
</comment>
<comment type="tissue specificity">
    <text evidence="4">Muscle (at protein level).</text>
</comment>
<comment type="allergen">
    <text evidence="4">Causes an allergic reaction in human. Binds to IgE in all 28 patients tested allergic to fish. IgE-binding is greatly reduced by treatment with periodate indicating the presence of carbohydrate-containing epitopes. Calcium depletion results in more than 50% reduction in IgE-binding in 9 patients out of 14 tested. Assays performed under reducing conditions do not affect IgE-binding.</text>
</comment>
<comment type="miscellaneous">
    <text>This parvalbumin has an isoelectric point of 4.40.</text>
</comment>
<comment type="similarity">
    <text evidence="6">Belongs to the parvalbumin family.</text>
</comment>
<dbReference type="PIR" id="A94236">
    <property type="entry name" value="PVCD"/>
</dbReference>
<dbReference type="SMR" id="P02622"/>
<dbReference type="Allergome" id="3290">
    <property type="allergen name" value="Gad c 1.0101"/>
</dbReference>
<dbReference type="Allergome" id="357">
    <property type="allergen name" value="Gad c 1"/>
</dbReference>
<dbReference type="iPTMnet" id="P02622"/>
<dbReference type="GO" id="GO:0005737">
    <property type="term" value="C:cytoplasm"/>
    <property type="evidence" value="ECO:0007669"/>
    <property type="project" value="TreeGrafter"/>
</dbReference>
<dbReference type="GO" id="GO:0005509">
    <property type="term" value="F:calcium ion binding"/>
    <property type="evidence" value="ECO:0007669"/>
    <property type="project" value="InterPro"/>
</dbReference>
<dbReference type="Gene3D" id="1.10.238.10">
    <property type="entry name" value="EF-hand"/>
    <property type="match status" value="1"/>
</dbReference>
<dbReference type="InterPro" id="IPR011992">
    <property type="entry name" value="EF-hand-dom_pair"/>
</dbReference>
<dbReference type="InterPro" id="IPR018247">
    <property type="entry name" value="EF_Hand_1_Ca_BS"/>
</dbReference>
<dbReference type="InterPro" id="IPR002048">
    <property type="entry name" value="EF_hand_dom"/>
</dbReference>
<dbReference type="InterPro" id="IPR008080">
    <property type="entry name" value="Parvalbumin"/>
</dbReference>
<dbReference type="PANTHER" id="PTHR11653:SF12">
    <property type="entry name" value="PARVALBUMIN"/>
    <property type="match status" value="1"/>
</dbReference>
<dbReference type="PANTHER" id="PTHR11653">
    <property type="entry name" value="PARVALBUMIN ALPHA"/>
    <property type="match status" value="1"/>
</dbReference>
<dbReference type="Pfam" id="PF13499">
    <property type="entry name" value="EF-hand_7"/>
    <property type="match status" value="1"/>
</dbReference>
<dbReference type="PRINTS" id="PR01697">
    <property type="entry name" value="PARVALBUMIN"/>
</dbReference>
<dbReference type="SMART" id="SM00054">
    <property type="entry name" value="EFh"/>
    <property type="match status" value="2"/>
</dbReference>
<dbReference type="SUPFAM" id="SSF47473">
    <property type="entry name" value="EF-hand"/>
    <property type="match status" value="1"/>
</dbReference>
<dbReference type="PROSITE" id="PS00018">
    <property type="entry name" value="EF_HAND_1"/>
    <property type="match status" value="2"/>
</dbReference>
<dbReference type="PROSITE" id="PS50222">
    <property type="entry name" value="EF_HAND_2"/>
    <property type="match status" value="2"/>
</dbReference>
<organism>
    <name type="scientific">Gadus morhua subsp. callarias</name>
    <name type="common">Baltic cod</name>
    <name type="synonym">Gadus callarias</name>
    <dbReference type="NCBI Taxonomy" id="8053"/>
    <lineage>
        <taxon>Eukaryota</taxon>
        <taxon>Metazoa</taxon>
        <taxon>Chordata</taxon>
        <taxon>Craniata</taxon>
        <taxon>Vertebrata</taxon>
        <taxon>Euteleostomi</taxon>
        <taxon>Actinopterygii</taxon>
        <taxon>Neopterygii</taxon>
        <taxon>Teleostei</taxon>
        <taxon>Neoteleostei</taxon>
        <taxon>Acanthomorphata</taxon>
        <taxon>Zeiogadaria</taxon>
        <taxon>Gadariae</taxon>
        <taxon>Gadiformes</taxon>
        <taxon>Gadoidei</taxon>
        <taxon>Gadidae</taxon>
        <taxon>Gadus</taxon>
    </lineage>
</organism>
<feature type="chain" id="PRO_0000073608" description="Parvalbumin beta">
    <location>
        <begin position="1"/>
        <end position="113"/>
    </location>
</feature>
<feature type="domain" description="EF-hand 1" evidence="2">
    <location>
        <begin position="38"/>
        <end position="73"/>
    </location>
</feature>
<feature type="domain" description="EF-hand 2" evidence="2">
    <location>
        <begin position="77"/>
        <end position="112"/>
    </location>
</feature>
<feature type="binding site" evidence="1 2">
    <location>
        <position position="51"/>
    </location>
    <ligand>
        <name>Ca(2+)</name>
        <dbReference type="ChEBI" id="CHEBI:29108"/>
        <label>1</label>
    </ligand>
</feature>
<feature type="binding site" evidence="1 2">
    <location>
        <position position="53"/>
    </location>
    <ligand>
        <name>Ca(2+)</name>
        <dbReference type="ChEBI" id="CHEBI:29108"/>
        <label>1</label>
    </ligand>
</feature>
<feature type="binding site" evidence="2">
    <location>
        <position position="55"/>
    </location>
    <ligand>
        <name>Ca(2+)</name>
        <dbReference type="ChEBI" id="CHEBI:29108"/>
        <label>1</label>
    </ligand>
</feature>
<feature type="binding site" evidence="1">
    <location>
        <position position="57"/>
    </location>
    <ligand>
        <name>Ca(2+)</name>
        <dbReference type="ChEBI" id="CHEBI:29108"/>
        <label>1</label>
    </ligand>
</feature>
<feature type="binding site" evidence="1">
    <location>
        <position position="59"/>
    </location>
    <ligand>
        <name>Ca(2+)</name>
        <dbReference type="ChEBI" id="CHEBI:29108"/>
        <label>1</label>
    </ligand>
</feature>
<feature type="binding site" evidence="1 2">
    <location>
        <position position="62"/>
    </location>
    <ligand>
        <name>Ca(2+)</name>
        <dbReference type="ChEBI" id="CHEBI:29108"/>
        <label>1</label>
    </ligand>
</feature>
<feature type="binding site" evidence="1 2">
    <location>
        <position position="90"/>
    </location>
    <ligand>
        <name>Ca(2+)</name>
        <dbReference type="ChEBI" id="CHEBI:29108"/>
        <label>2</label>
    </ligand>
</feature>
<feature type="binding site" evidence="1 2">
    <location>
        <position position="92"/>
    </location>
    <ligand>
        <name>Ca(2+)</name>
        <dbReference type="ChEBI" id="CHEBI:29108"/>
        <label>2</label>
    </ligand>
</feature>
<feature type="binding site" evidence="1 2">
    <location>
        <position position="94"/>
    </location>
    <ligand>
        <name>Ca(2+)</name>
        <dbReference type="ChEBI" id="CHEBI:29108"/>
        <label>2</label>
    </ligand>
</feature>
<feature type="binding site" evidence="2">
    <location>
        <position position="96"/>
    </location>
    <ligand>
        <name>Ca(2+)</name>
        <dbReference type="ChEBI" id="CHEBI:29108"/>
        <label>2</label>
    </ligand>
</feature>
<feature type="binding site" evidence="1 2">
    <location>
        <position position="101"/>
    </location>
    <ligand>
        <name>Ca(2+)</name>
        <dbReference type="ChEBI" id="CHEBI:29108"/>
        <label>2</label>
    </ligand>
</feature>
<feature type="modified residue" description="N-acetylalanine" evidence="3">
    <location>
        <position position="1"/>
    </location>
</feature>
<feature type="glycosylation site" description="S-linked (Glc) cysteine" evidence="6">
    <location>
        <position position="18"/>
    </location>
</feature>
<reference key="1">
    <citation type="journal article" date="1975" name="Scand. J. Immunol.">
        <title>The primary structure of allergen M from cod.</title>
        <authorList>
            <person name="Elsayed S."/>
            <person name="Bennich H."/>
        </authorList>
    </citation>
    <scope>PROTEIN SEQUENCE OF 1-75</scope>
    <scope>ACETYLATION AT ALA-1</scope>
</reference>
<reference key="2">
    <citation type="journal article" date="1974" name="Scand. J. Immunol.">
        <title>The primary structure of fragment TM2 of allergen M from cod.</title>
        <authorList>
            <person name="Elsayed S."/>
            <person name="von Bahr-Lindstroem H."/>
            <person name="Bennich H."/>
        </authorList>
    </citation>
    <scope>PROTEIN SEQUENCE OF 76-113</scope>
</reference>
<reference key="3">
    <citation type="journal article" date="1987" name="Biophys. Chem.">
        <title>Stopped-flow kinetic studies of Ca(II) and Mg(II) dissociation in cod parvalbumin and bovine alpha-lactalbumin.</title>
        <authorList>
            <person name="Permyakov E.A."/>
            <person name="Ostrovsky A.V."/>
            <person name="Kalinichenko L.P."/>
        </authorList>
    </citation>
    <scope>CALCIUM-BINDING</scope>
</reference>
<reference key="4">
    <citation type="journal article" date="1998" name="J. Allergy Clin. Immunol.">
        <title>Parvalbumin, a cross-reactive fish allergen, contains IgE-binding epitopes sensitive to periodate treatment and Ca2+ depletion.</title>
        <authorList>
            <person name="Bugajska-Schretter A."/>
            <person name="Elfman L."/>
            <person name="Fuchs T."/>
            <person name="Kapiotis S."/>
            <person name="Rumpold H."/>
            <person name="Valenta R."/>
            <person name="Spitzauer S."/>
        </authorList>
    </citation>
    <scope>TISSUE SPECIFICITY</scope>
    <scope>ALLERGEN</scope>
</reference>
<proteinExistence type="evidence at protein level"/>
<accession>P02622</accession>